<feature type="chain" id="PRO_0000234887" description="Large ribosomal subunit protein uL10">
    <location>
        <begin position="1"/>
        <end position="165"/>
    </location>
</feature>
<feature type="modified residue" description="N6-acetyllysine" evidence="1">
    <location>
        <position position="37"/>
    </location>
</feature>
<feature type="modified residue" description="N6-acetyllysine" evidence="1">
    <location>
        <position position="105"/>
    </location>
</feature>
<reference key="1">
    <citation type="journal article" date="2005" name="Nucleic Acids Res.">
        <title>Genome dynamics and diversity of Shigella species, the etiologic agents of bacillary dysentery.</title>
        <authorList>
            <person name="Yang F."/>
            <person name="Yang J."/>
            <person name="Zhang X."/>
            <person name="Chen L."/>
            <person name="Jiang Y."/>
            <person name="Yan Y."/>
            <person name="Tang X."/>
            <person name="Wang J."/>
            <person name="Xiong Z."/>
            <person name="Dong J."/>
            <person name="Xue Y."/>
            <person name="Zhu Y."/>
            <person name="Xu X."/>
            <person name="Sun L."/>
            <person name="Chen S."/>
            <person name="Nie H."/>
            <person name="Peng J."/>
            <person name="Xu J."/>
            <person name="Wang Y."/>
            <person name="Yuan Z."/>
            <person name="Wen Y."/>
            <person name="Yao Z."/>
            <person name="Shen Y."/>
            <person name="Qiang B."/>
            <person name="Hou Y."/>
            <person name="Yu J."/>
            <person name="Jin Q."/>
        </authorList>
    </citation>
    <scope>NUCLEOTIDE SEQUENCE [LARGE SCALE GENOMIC DNA]</scope>
    <source>
        <strain>Ss046</strain>
    </source>
</reference>
<dbReference type="EMBL" id="CP000038">
    <property type="protein sequence ID" value="AAZ90663.1"/>
    <property type="molecule type" value="Genomic_DNA"/>
</dbReference>
<dbReference type="RefSeq" id="WP_001207201.1">
    <property type="nucleotide sequence ID" value="NC_007384.1"/>
</dbReference>
<dbReference type="SMR" id="Q3YUZ9"/>
<dbReference type="GeneID" id="93777909"/>
<dbReference type="KEGG" id="ssn:SSON_4158"/>
<dbReference type="HOGENOM" id="CLU_092227_0_2_6"/>
<dbReference type="Proteomes" id="UP000002529">
    <property type="component" value="Chromosome"/>
</dbReference>
<dbReference type="GO" id="GO:0015934">
    <property type="term" value="C:large ribosomal subunit"/>
    <property type="evidence" value="ECO:0007669"/>
    <property type="project" value="InterPro"/>
</dbReference>
<dbReference type="GO" id="GO:0070180">
    <property type="term" value="F:large ribosomal subunit rRNA binding"/>
    <property type="evidence" value="ECO:0007669"/>
    <property type="project" value="UniProtKB-UniRule"/>
</dbReference>
<dbReference type="GO" id="GO:0003735">
    <property type="term" value="F:structural constituent of ribosome"/>
    <property type="evidence" value="ECO:0007669"/>
    <property type="project" value="InterPro"/>
</dbReference>
<dbReference type="GO" id="GO:0006412">
    <property type="term" value="P:translation"/>
    <property type="evidence" value="ECO:0007669"/>
    <property type="project" value="UniProtKB-UniRule"/>
</dbReference>
<dbReference type="CDD" id="cd05797">
    <property type="entry name" value="Ribosomal_L10"/>
    <property type="match status" value="1"/>
</dbReference>
<dbReference type="FunFam" id="3.30.70.1730:FF:000001">
    <property type="entry name" value="50S ribosomal protein L10"/>
    <property type="match status" value="1"/>
</dbReference>
<dbReference type="Gene3D" id="3.30.70.1730">
    <property type="match status" value="1"/>
</dbReference>
<dbReference type="Gene3D" id="6.10.250.2350">
    <property type="match status" value="1"/>
</dbReference>
<dbReference type="HAMAP" id="MF_00362">
    <property type="entry name" value="Ribosomal_uL10"/>
    <property type="match status" value="1"/>
</dbReference>
<dbReference type="InterPro" id="IPR001790">
    <property type="entry name" value="Ribosomal_uL10"/>
</dbReference>
<dbReference type="InterPro" id="IPR043141">
    <property type="entry name" value="Ribosomal_uL10-like_sf"/>
</dbReference>
<dbReference type="InterPro" id="IPR022973">
    <property type="entry name" value="Ribosomal_uL10_bac"/>
</dbReference>
<dbReference type="InterPro" id="IPR047865">
    <property type="entry name" value="Ribosomal_uL10_bac_type"/>
</dbReference>
<dbReference type="InterPro" id="IPR002363">
    <property type="entry name" value="Ribosomal_uL10_CS_bac"/>
</dbReference>
<dbReference type="NCBIfam" id="NF000955">
    <property type="entry name" value="PRK00099.1-1"/>
    <property type="match status" value="1"/>
</dbReference>
<dbReference type="PANTHER" id="PTHR11560">
    <property type="entry name" value="39S RIBOSOMAL PROTEIN L10, MITOCHONDRIAL"/>
    <property type="match status" value="1"/>
</dbReference>
<dbReference type="Pfam" id="PF00466">
    <property type="entry name" value="Ribosomal_L10"/>
    <property type="match status" value="1"/>
</dbReference>
<dbReference type="SUPFAM" id="SSF160369">
    <property type="entry name" value="Ribosomal protein L10-like"/>
    <property type="match status" value="1"/>
</dbReference>
<dbReference type="PROSITE" id="PS01109">
    <property type="entry name" value="RIBOSOMAL_L10"/>
    <property type="match status" value="1"/>
</dbReference>
<sequence>MALNLQDKQAIVAEVSEVAKGALSAVVADSRGVTVDKMTELRKAGREAGVYMRVVRNTLLRRAVEGTPFECLKDAFVGPTLIAYSMEHPGAAARLFKEFAKANAKFEVKAAAFEGELIPASQIDRLATLPTYEEAIARLMATMKEASAGKLVRTLAAVRDAKEAA</sequence>
<comment type="function">
    <text evidence="1">Forms part of the ribosomal stalk, playing a central role in the interaction of the ribosome with GTP-bound translation factors.</text>
</comment>
<comment type="subunit">
    <text evidence="1">Part of the ribosomal stalk of the 50S ribosomal subunit. The N-terminus interacts with L11 and the large rRNA to form the base of the stalk. The C-terminus forms an elongated spine to which L12 dimers bind in a sequential fashion forming a multimeric L10(L12)X complex.</text>
</comment>
<comment type="similarity">
    <text evidence="1">Belongs to the universal ribosomal protein uL10 family.</text>
</comment>
<keyword id="KW-0007">Acetylation</keyword>
<keyword id="KW-1185">Reference proteome</keyword>
<keyword id="KW-0687">Ribonucleoprotein</keyword>
<keyword id="KW-0689">Ribosomal protein</keyword>
<keyword id="KW-0694">RNA-binding</keyword>
<keyword id="KW-0699">rRNA-binding</keyword>
<evidence type="ECO:0000255" key="1">
    <source>
        <dbReference type="HAMAP-Rule" id="MF_00362"/>
    </source>
</evidence>
<evidence type="ECO:0000305" key="2"/>
<proteinExistence type="inferred from homology"/>
<organism>
    <name type="scientific">Shigella sonnei (strain Ss046)</name>
    <dbReference type="NCBI Taxonomy" id="300269"/>
    <lineage>
        <taxon>Bacteria</taxon>
        <taxon>Pseudomonadati</taxon>
        <taxon>Pseudomonadota</taxon>
        <taxon>Gammaproteobacteria</taxon>
        <taxon>Enterobacterales</taxon>
        <taxon>Enterobacteriaceae</taxon>
        <taxon>Shigella</taxon>
    </lineage>
</organism>
<protein>
    <recommendedName>
        <fullName evidence="1">Large ribosomal subunit protein uL10</fullName>
    </recommendedName>
    <alternativeName>
        <fullName evidence="2">50S ribosomal protein L10</fullName>
    </alternativeName>
</protein>
<gene>
    <name evidence="1" type="primary">rplJ</name>
    <name type="ordered locus">SSON_4158</name>
</gene>
<accession>Q3YUZ9</accession>
<name>RL10_SHISS</name>